<name>HFA6B_ORYSJ</name>
<protein>
    <recommendedName>
        <fullName>Heat stress transcription factor A-6a</fullName>
    </recommendedName>
    <alternativeName>
        <fullName>Heat stress transcription factor 1</fullName>
        <shortName>OsHsf-01</shortName>
    </alternativeName>
</protein>
<keyword id="KW-0175">Coiled coil</keyword>
<keyword id="KW-0238">DNA-binding</keyword>
<keyword id="KW-0539">Nucleus</keyword>
<keyword id="KW-0597">Phosphoprotein</keyword>
<keyword id="KW-1185">Reference proteome</keyword>
<keyword id="KW-0346">Stress response</keyword>
<keyword id="KW-0804">Transcription</keyword>
<keyword id="KW-0805">Transcription regulation</keyword>
<gene>
    <name type="primary">HSFA6B</name>
    <name type="synonym">HSF01</name>
    <name type="ordered locus">Os01g0571300</name>
    <name type="ordered locus">LOC_Os01g39020</name>
    <name type="ORF">B1129G05.5</name>
    <name type="ORF">OsJ_002223</name>
</gene>
<accession>Q657C0</accession>
<accession>A0A0P0V498</accession>
<accession>A2ZUK1</accession>
<feature type="chain" id="PRO_0000350831" description="Heat stress transcription factor A-6a">
    <location>
        <begin position="1"/>
        <end position="402"/>
    </location>
</feature>
<feature type="region of interest" description="Disordered" evidence="3">
    <location>
        <begin position="1"/>
        <end position="28"/>
    </location>
</feature>
<feature type="region of interest" description="Hydrophobic repeat HR-A/B">
    <location>
        <begin position="216"/>
        <end position="266"/>
    </location>
</feature>
<feature type="coiled-coil region" evidence="2">
    <location>
        <begin position="212"/>
        <end position="258"/>
    </location>
</feature>
<feature type="short sequence motif" description="Nuclear localization signal" evidence="2">
    <location>
        <begin position="290"/>
        <end position="293"/>
    </location>
</feature>
<feature type="short sequence motif" description="AHA">
    <location>
        <begin position="349"/>
        <end position="358"/>
    </location>
</feature>
<feature type="sequence conflict" description="In Ref. 6; AK064271." evidence="5" ref="6">
    <original>Q</original>
    <variation>R</variation>
    <location>
        <position position="257"/>
    </location>
</feature>
<comment type="function">
    <text evidence="1">Transcriptional regulator that specifically binds DNA of heat shock promoter elements (HSE).</text>
</comment>
<comment type="subunit">
    <text evidence="1">Homotrimer.</text>
</comment>
<comment type="subcellular location">
    <subcellularLocation>
        <location evidence="5">Nucleus</location>
    </subcellularLocation>
</comment>
<comment type="domain">
    <text evidence="4">The hydrophobic-rich region (HR-A/B) corresponds to the oligomerization domain. AHA motifs are transcriptional activator elements.</text>
</comment>
<comment type="PTM">
    <text evidence="1">Exhibits temperature-dependent phosphorylation.</text>
</comment>
<comment type="similarity">
    <text evidence="5">Belongs to the HSF family. Class A subfamily.</text>
</comment>
<comment type="sequence caution" evidence="5">
    <conflict type="erroneous initiation">
        <sequence resource="EMBL-CDS" id="EAZ12398"/>
    </conflict>
</comment>
<sequence>MLKPQTPRARRAAHPNSHMASSSSSSSLCRLLIPRPTTRRFSGGGGEGGMAAAAPVKREVKPEAGEGWGGGDLGVVPPPPRPMEGLGEAGPAPFVAKTYEMVADAATDAVVSWGPGGSGASFVVWDPHALAAGVLPRFFKHANFSSFVRQLNTYGFRKVTPDRWEFANEAFLAGQKHLLKNIKRRRVSKPLVDSQLRNKASVVFGQPEAPGEVVSLKRDRAALRAEVIMLKQQYNACKSQLIAMEEMVRNIERRQQQTIGFFAKVLTNPAFVQQVLLNYVNKNGLRGAAKRQRLMENEEQHADSPLNKGMEAASVMEADVSPGSTGCGTVGKVETTPMCNFQNIENMCDDVWEELDALPETGMEQEEKAGIGSFDVEEFVGRPCGWVDDCPYLVEPMQFVEH</sequence>
<organism>
    <name type="scientific">Oryza sativa subsp. japonica</name>
    <name type="common">Rice</name>
    <dbReference type="NCBI Taxonomy" id="39947"/>
    <lineage>
        <taxon>Eukaryota</taxon>
        <taxon>Viridiplantae</taxon>
        <taxon>Streptophyta</taxon>
        <taxon>Embryophyta</taxon>
        <taxon>Tracheophyta</taxon>
        <taxon>Spermatophyta</taxon>
        <taxon>Magnoliopsida</taxon>
        <taxon>Liliopsida</taxon>
        <taxon>Poales</taxon>
        <taxon>Poaceae</taxon>
        <taxon>BOP clade</taxon>
        <taxon>Oryzoideae</taxon>
        <taxon>Oryzeae</taxon>
        <taxon>Oryzinae</taxon>
        <taxon>Oryza</taxon>
        <taxon>Oryza sativa</taxon>
    </lineage>
</organism>
<evidence type="ECO:0000250" key="1"/>
<evidence type="ECO:0000255" key="2"/>
<evidence type="ECO:0000256" key="3">
    <source>
        <dbReference type="SAM" id="MobiDB-lite"/>
    </source>
</evidence>
<evidence type="ECO:0000269" key="4">
    <source>
    </source>
</evidence>
<evidence type="ECO:0000305" key="5"/>
<proteinExistence type="evidence at transcript level"/>
<reference key="1">
    <citation type="journal article" date="2002" name="Nature">
        <title>The genome sequence and structure of rice chromosome 1.</title>
        <authorList>
            <person name="Sasaki T."/>
            <person name="Matsumoto T."/>
            <person name="Yamamoto K."/>
            <person name="Sakata K."/>
            <person name="Baba T."/>
            <person name="Katayose Y."/>
            <person name="Wu J."/>
            <person name="Niimura Y."/>
            <person name="Cheng Z."/>
            <person name="Nagamura Y."/>
            <person name="Antonio B.A."/>
            <person name="Kanamori H."/>
            <person name="Hosokawa S."/>
            <person name="Masukawa M."/>
            <person name="Arikawa K."/>
            <person name="Chiden Y."/>
            <person name="Hayashi M."/>
            <person name="Okamoto M."/>
            <person name="Ando T."/>
            <person name="Aoki H."/>
            <person name="Arita K."/>
            <person name="Hamada M."/>
            <person name="Harada C."/>
            <person name="Hijishita S."/>
            <person name="Honda M."/>
            <person name="Ichikawa Y."/>
            <person name="Idonuma A."/>
            <person name="Iijima M."/>
            <person name="Ikeda M."/>
            <person name="Ikeno M."/>
            <person name="Ito S."/>
            <person name="Ito T."/>
            <person name="Ito Y."/>
            <person name="Ito Y."/>
            <person name="Iwabuchi A."/>
            <person name="Kamiya K."/>
            <person name="Karasawa W."/>
            <person name="Katagiri S."/>
            <person name="Kikuta A."/>
            <person name="Kobayashi N."/>
            <person name="Kono I."/>
            <person name="Machita K."/>
            <person name="Maehara T."/>
            <person name="Mizuno H."/>
            <person name="Mizubayashi T."/>
            <person name="Mukai Y."/>
            <person name="Nagasaki H."/>
            <person name="Nakashima M."/>
            <person name="Nakama Y."/>
            <person name="Nakamichi Y."/>
            <person name="Nakamura M."/>
            <person name="Namiki N."/>
            <person name="Negishi M."/>
            <person name="Ohta I."/>
            <person name="Ono N."/>
            <person name="Saji S."/>
            <person name="Sakai K."/>
            <person name="Shibata M."/>
            <person name="Shimokawa T."/>
            <person name="Shomura A."/>
            <person name="Song J."/>
            <person name="Takazaki Y."/>
            <person name="Terasawa K."/>
            <person name="Tsuji K."/>
            <person name="Waki K."/>
            <person name="Yamagata H."/>
            <person name="Yamane H."/>
            <person name="Yoshiki S."/>
            <person name="Yoshihara R."/>
            <person name="Yukawa K."/>
            <person name="Zhong H."/>
            <person name="Iwama H."/>
            <person name="Endo T."/>
            <person name="Ito H."/>
            <person name="Hahn J.H."/>
            <person name="Kim H.-I."/>
            <person name="Eun M.-Y."/>
            <person name="Yano M."/>
            <person name="Jiang J."/>
            <person name="Gojobori T."/>
        </authorList>
    </citation>
    <scope>NUCLEOTIDE SEQUENCE [LARGE SCALE GENOMIC DNA]</scope>
    <source>
        <strain>cv. Nipponbare</strain>
    </source>
</reference>
<reference key="2">
    <citation type="journal article" date="2005" name="Nature">
        <title>The map-based sequence of the rice genome.</title>
        <authorList>
            <consortium name="International rice genome sequencing project (IRGSP)"/>
        </authorList>
    </citation>
    <scope>NUCLEOTIDE SEQUENCE [LARGE SCALE GENOMIC DNA]</scope>
    <source>
        <strain>cv. Nipponbare</strain>
    </source>
</reference>
<reference key="3">
    <citation type="journal article" date="2008" name="Nucleic Acids Res.">
        <title>The rice annotation project database (RAP-DB): 2008 update.</title>
        <authorList>
            <consortium name="The rice annotation project (RAP)"/>
        </authorList>
    </citation>
    <scope>GENOME REANNOTATION</scope>
    <source>
        <strain>cv. Nipponbare</strain>
    </source>
</reference>
<reference key="4">
    <citation type="journal article" date="2013" name="Rice">
        <title>Improvement of the Oryza sativa Nipponbare reference genome using next generation sequence and optical map data.</title>
        <authorList>
            <person name="Kawahara Y."/>
            <person name="de la Bastide M."/>
            <person name="Hamilton J.P."/>
            <person name="Kanamori H."/>
            <person name="McCombie W.R."/>
            <person name="Ouyang S."/>
            <person name="Schwartz D.C."/>
            <person name="Tanaka T."/>
            <person name="Wu J."/>
            <person name="Zhou S."/>
            <person name="Childs K.L."/>
            <person name="Davidson R.M."/>
            <person name="Lin H."/>
            <person name="Quesada-Ocampo L."/>
            <person name="Vaillancourt B."/>
            <person name="Sakai H."/>
            <person name="Lee S.S."/>
            <person name="Kim J."/>
            <person name="Numa H."/>
            <person name="Itoh T."/>
            <person name="Buell C.R."/>
            <person name="Matsumoto T."/>
        </authorList>
    </citation>
    <scope>GENOME REANNOTATION</scope>
    <source>
        <strain>cv. Nipponbare</strain>
    </source>
</reference>
<reference key="5">
    <citation type="journal article" date="2005" name="PLoS Biol.">
        <title>The genomes of Oryza sativa: a history of duplications.</title>
        <authorList>
            <person name="Yu J."/>
            <person name="Wang J."/>
            <person name="Lin W."/>
            <person name="Li S."/>
            <person name="Li H."/>
            <person name="Zhou J."/>
            <person name="Ni P."/>
            <person name="Dong W."/>
            <person name="Hu S."/>
            <person name="Zeng C."/>
            <person name="Zhang J."/>
            <person name="Zhang Y."/>
            <person name="Li R."/>
            <person name="Xu Z."/>
            <person name="Li S."/>
            <person name="Li X."/>
            <person name="Zheng H."/>
            <person name="Cong L."/>
            <person name="Lin L."/>
            <person name="Yin J."/>
            <person name="Geng J."/>
            <person name="Li G."/>
            <person name="Shi J."/>
            <person name="Liu J."/>
            <person name="Lv H."/>
            <person name="Li J."/>
            <person name="Wang J."/>
            <person name="Deng Y."/>
            <person name="Ran L."/>
            <person name="Shi X."/>
            <person name="Wang X."/>
            <person name="Wu Q."/>
            <person name="Li C."/>
            <person name="Ren X."/>
            <person name="Wang J."/>
            <person name="Wang X."/>
            <person name="Li D."/>
            <person name="Liu D."/>
            <person name="Zhang X."/>
            <person name="Ji Z."/>
            <person name="Zhao W."/>
            <person name="Sun Y."/>
            <person name="Zhang Z."/>
            <person name="Bao J."/>
            <person name="Han Y."/>
            <person name="Dong L."/>
            <person name="Ji J."/>
            <person name="Chen P."/>
            <person name="Wu S."/>
            <person name="Liu J."/>
            <person name="Xiao Y."/>
            <person name="Bu D."/>
            <person name="Tan J."/>
            <person name="Yang L."/>
            <person name="Ye C."/>
            <person name="Zhang J."/>
            <person name="Xu J."/>
            <person name="Zhou Y."/>
            <person name="Yu Y."/>
            <person name="Zhang B."/>
            <person name="Zhuang S."/>
            <person name="Wei H."/>
            <person name="Liu B."/>
            <person name="Lei M."/>
            <person name="Yu H."/>
            <person name="Li Y."/>
            <person name="Xu H."/>
            <person name="Wei S."/>
            <person name="He X."/>
            <person name="Fang L."/>
            <person name="Zhang Z."/>
            <person name="Zhang Y."/>
            <person name="Huang X."/>
            <person name="Su Z."/>
            <person name="Tong W."/>
            <person name="Li J."/>
            <person name="Tong Z."/>
            <person name="Li S."/>
            <person name="Ye J."/>
            <person name="Wang L."/>
            <person name="Fang L."/>
            <person name="Lei T."/>
            <person name="Chen C.-S."/>
            <person name="Chen H.-C."/>
            <person name="Xu Z."/>
            <person name="Li H."/>
            <person name="Huang H."/>
            <person name="Zhang F."/>
            <person name="Xu H."/>
            <person name="Li N."/>
            <person name="Zhao C."/>
            <person name="Li S."/>
            <person name="Dong L."/>
            <person name="Huang Y."/>
            <person name="Li L."/>
            <person name="Xi Y."/>
            <person name="Qi Q."/>
            <person name="Li W."/>
            <person name="Zhang B."/>
            <person name="Hu W."/>
            <person name="Zhang Y."/>
            <person name="Tian X."/>
            <person name="Jiao Y."/>
            <person name="Liang X."/>
            <person name="Jin J."/>
            <person name="Gao L."/>
            <person name="Zheng W."/>
            <person name="Hao B."/>
            <person name="Liu S.-M."/>
            <person name="Wang W."/>
            <person name="Yuan L."/>
            <person name="Cao M."/>
            <person name="McDermott J."/>
            <person name="Samudrala R."/>
            <person name="Wang J."/>
            <person name="Wong G.K.-S."/>
            <person name="Yang H."/>
        </authorList>
    </citation>
    <scope>NUCLEOTIDE SEQUENCE [LARGE SCALE GENOMIC DNA]</scope>
    <source>
        <strain>cv. Nipponbare</strain>
    </source>
</reference>
<reference key="6">
    <citation type="journal article" date="2003" name="Science">
        <title>Collection, mapping, and annotation of over 28,000 cDNA clones from japonica rice.</title>
        <authorList>
            <consortium name="The rice full-length cDNA consortium"/>
        </authorList>
    </citation>
    <scope>NUCLEOTIDE SEQUENCE [LARGE SCALE MRNA]</scope>
    <source>
        <strain>cv. Nipponbare</strain>
    </source>
</reference>
<reference key="7">
    <citation type="journal article" date="2004" name="J. Biosci.">
        <title>Heat stress response in plants: a complex game with chaperones and more than twenty heat stress transcription factors.</title>
        <authorList>
            <person name="Baniwal S.K."/>
            <person name="Bharti K."/>
            <person name="Chan K.Y."/>
            <person name="Fauth M."/>
            <person name="Ganguli A."/>
            <person name="Kotak S."/>
            <person name="Mishra S.K."/>
            <person name="Nover L."/>
            <person name="Port M."/>
            <person name="Scharf K.-D."/>
            <person name="Tripp J."/>
            <person name="Weber C."/>
            <person name="Zielinski D."/>
            <person name="von Koskull-Doering P."/>
        </authorList>
    </citation>
    <scope>GENE FAMILY</scope>
    <scope>NOMENCLATURE</scope>
</reference>
<reference key="8">
    <citation type="journal article" date="2008" name="J. Genet. Genomics">
        <title>Genome-wide analysis of heat shock transcription factor families in rice and Arabidopsis.</title>
        <authorList>
            <person name="Guo J."/>
            <person name="Wu J."/>
            <person name="Ji Q."/>
            <person name="Wang C."/>
            <person name="Luo L."/>
            <person name="Yuan Y."/>
            <person name="Wang Y."/>
            <person name="Wang J."/>
        </authorList>
    </citation>
    <scope>GENE FAMILY</scope>
    <scope>NOMENCLATURE</scope>
    <scope>DOMAIN AHA</scope>
</reference>
<dbReference type="EMBL" id="AP003308">
    <property type="protein sequence ID" value="BAD45089.1"/>
    <property type="molecule type" value="Genomic_DNA"/>
</dbReference>
<dbReference type="EMBL" id="AP008207">
    <property type="protein sequence ID" value="BAF05292.1"/>
    <property type="molecule type" value="Genomic_DNA"/>
</dbReference>
<dbReference type="EMBL" id="AP014957">
    <property type="protein sequence ID" value="BAS72792.1"/>
    <property type="molecule type" value="Genomic_DNA"/>
</dbReference>
<dbReference type="EMBL" id="CM000138">
    <property type="protein sequence ID" value="EAZ12398.1"/>
    <property type="status" value="ALT_INIT"/>
    <property type="molecule type" value="Genomic_DNA"/>
</dbReference>
<dbReference type="EMBL" id="AK064271">
    <property type="status" value="NOT_ANNOTATED_CDS"/>
    <property type="molecule type" value="mRNA"/>
</dbReference>
<dbReference type="RefSeq" id="XP_015631502.1">
    <property type="nucleotide sequence ID" value="XM_015776016.1"/>
</dbReference>
<dbReference type="SMR" id="Q657C0"/>
<dbReference type="FunCoup" id="Q657C0">
    <property type="interactions" value="17"/>
</dbReference>
<dbReference type="STRING" id="39947.Q657C0"/>
<dbReference type="PaxDb" id="39947-Q657C0"/>
<dbReference type="EnsemblPlants" id="Os01t0571300-01">
    <property type="protein sequence ID" value="Os01t0571300-01"/>
    <property type="gene ID" value="Os01g0571300"/>
</dbReference>
<dbReference type="Gramene" id="Os01t0571300-01">
    <property type="protein sequence ID" value="Os01t0571300-01"/>
    <property type="gene ID" value="Os01g0571300"/>
</dbReference>
<dbReference type="KEGG" id="dosa:Os01g0571300"/>
<dbReference type="eggNOG" id="KOG0627">
    <property type="taxonomic scope" value="Eukaryota"/>
</dbReference>
<dbReference type="HOGENOM" id="CLU_030308_1_3_1"/>
<dbReference type="InParanoid" id="Q657C0"/>
<dbReference type="OMA" id="QFVEHYD"/>
<dbReference type="OrthoDB" id="60033at2759"/>
<dbReference type="PlantReactome" id="R-OSA-9623703">
    <property type="pathway name" value="HSFA7/ HSFA6B-regulatory network-induced by drought and ABA"/>
</dbReference>
<dbReference type="Proteomes" id="UP000000763">
    <property type="component" value="Chromosome 1"/>
</dbReference>
<dbReference type="Proteomes" id="UP000007752">
    <property type="component" value="Chromosome 1"/>
</dbReference>
<dbReference type="Proteomes" id="UP000059680">
    <property type="component" value="Chromosome 1"/>
</dbReference>
<dbReference type="GO" id="GO:0005634">
    <property type="term" value="C:nucleus"/>
    <property type="evidence" value="ECO:0000318"/>
    <property type="project" value="GO_Central"/>
</dbReference>
<dbReference type="GO" id="GO:0003700">
    <property type="term" value="F:DNA-binding transcription factor activity"/>
    <property type="evidence" value="ECO:0000318"/>
    <property type="project" value="GO_Central"/>
</dbReference>
<dbReference type="GO" id="GO:0043565">
    <property type="term" value="F:sequence-specific DNA binding"/>
    <property type="evidence" value="ECO:0007669"/>
    <property type="project" value="InterPro"/>
</dbReference>
<dbReference type="GO" id="GO:0034605">
    <property type="term" value="P:cellular response to heat"/>
    <property type="evidence" value="ECO:0000318"/>
    <property type="project" value="GO_Central"/>
</dbReference>
<dbReference type="GO" id="GO:0006357">
    <property type="term" value="P:regulation of transcription by RNA polymerase II"/>
    <property type="evidence" value="ECO:0000318"/>
    <property type="project" value="GO_Central"/>
</dbReference>
<dbReference type="FunFam" id="1.10.10.10:FF:000367">
    <property type="entry name" value="Heat stress transcription factor A-8"/>
    <property type="match status" value="1"/>
</dbReference>
<dbReference type="Gene3D" id="1.10.10.10">
    <property type="entry name" value="Winged helix-like DNA-binding domain superfamily/Winged helix DNA-binding domain"/>
    <property type="match status" value="1"/>
</dbReference>
<dbReference type="InterPro" id="IPR000232">
    <property type="entry name" value="HSF_DNA-bd"/>
</dbReference>
<dbReference type="InterPro" id="IPR036388">
    <property type="entry name" value="WH-like_DNA-bd_sf"/>
</dbReference>
<dbReference type="InterPro" id="IPR036390">
    <property type="entry name" value="WH_DNA-bd_sf"/>
</dbReference>
<dbReference type="PANTHER" id="PTHR10015">
    <property type="entry name" value="HEAT SHOCK TRANSCRIPTION FACTOR"/>
    <property type="match status" value="1"/>
</dbReference>
<dbReference type="PANTHER" id="PTHR10015:SF322">
    <property type="entry name" value="HEAT STRESS TRANSCRIPTION FACTOR A-7A"/>
    <property type="match status" value="1"/>
</dbReference>
<dbReference type="Pfam" id="PF00447">
    <property type="entry name" value="HSF_DNA-bind"/>
    <property type="match status" value="1"/>
</dbReference>
<dbReference type="PRINTS" id="PR00056">
    <property type="entry name" value="HSFDOMAIN"/>
</dbReference>
<dbReference type="SMART" id="SM00415">
    <property type="entry name" value="HSF"/>
    <property type="match status" value="1"/>
</dbReference>
<dbReference type="SUPFAM" id="SSF46785">
    <property type="entry name" value="Winged helix' DNA-binding domain"/>
    <property type="match status" value="1"/>
</dbReference>
<dbReference type="PROSITE" id="PS00434">
    <property type="entry name" value="HSF_DOMAIN"/>
    <property type="match status" value="1"/>
</dbReference>